<gene>
    <name evidence="1" type="primary">fluC</name>
    <name evidence="1" type="synonym">crcB</name>
    <name type="ordered locus">RHE_CH02237</name>
</gene>
<dbReference type="EMBL" id="CP000133">
    <property type="protein sequence ID" value="ABC91017.1"/>
    <property type="molecule type" value="Genomic_DNA"/>
</dbReference>
<dbReference type="RefSeq" id="WP_011425498.1">
    <property type="nucleotide sequence ID" value="NC_007761.1"/>
</dbReference>
<dbReference type="SMR" id="Q2K819"/>
<dbReference type="KEGG" id="ret:RHE_CH02237"/>
<dbReference type="eggNOG" id="COG0239">
    <property type="taxonomic scope" value="Bacteria"/>
</dbReference>
<dbReference type="HOGENOM" id="CLU_114342_2_3_5"/>
<dbReference type="OrthoDB" id="9806299at2"/>
<dbReference type="Proteomes" id="UP000001936">
    <property type="component" value="Chromosome"/>
</dbReference>
<dbReference type="GO" id="GO:0005886">
    <property type="term" value="C:plasma membrane"/>
    <property type="evidence" value="ECO:0007669"/>
    <property type="project" value="UniProtKB-SubCell"/>
</dbReference>
<dbReference type="GO" id="GO:0062054">
    <property type="term" value="F:fluoride channel activity"/>
    <property type="evidence" value="ECO:0007669"/>
    <property type="project" value="UniProtKB-UniRule"/>
</dbReference>
<dbReference type="GO" id="GO:0046872">
    <property type="term" value="F:metal ion binding"/>
    <property type="evidence" value="ECO:0007669"/>
    <property type="project" value="UniProtKB-KW"/>
</dbReference>
<dbReference type="GO" id="GO:0140114">
    <property type="term" value="P:cellular detoxification of fluoride"/>
    <property type="evidence" value="ECO:0007669"/>
    <property type="project" value="UniProtKB-UniRule"/>
</dbReference>
<dbReference type="HAMAP" id="MF_00454">
    <property type="entry name" value="FluC"/>
    <property type="match status" value="1"/>
</dbReference>
<dbReference type="InterPro" id="IPR003691">
    <property type="entry name" value="FluC"/>
</dbReference>
<dbReference type="NCBIfam" id="TIGR00494">
    <property type="entry name" value="crcB"/>
    <property type="match status" value="1"/>
</dbReference>
<dbReference type="NCBIfam" id="NF010791">
    <property type="entry name" value="PRK14195.1"/>
    <property type="match status" value="1"/>
</dbReference>
<dbReference type="PANTHER" id="PTHR28259">
    <property type="entry name" value="FLUORIDE EXPORT PROTEIN 1-RELATED"/>
    <property type="match status" value="1"/>
</dbReference>
<dbReference type="PANTHER" id="PTHR28259:SF1">
    <property type="entry name" value="FLUORIDE EXPORT PROTEIN 1-RELATED"/>
    <property type="match status" value="1"/>
</dbReference>
<dbReference type="Pfam" id="PF02537">
    <property type="entry name" value="CRCB"/>
    <property type="match status" value="1"/>
</dbReference>
<evidence type="ECO:0000255" key="1">
    <source>
        <dbReference type="HAMAP-Rule" id="MF_00454"/>
    </source>
</evidence>
<comment type="function">
    <text evidence="1">Fluoride-specific ion channel. Important for reducing fluoride concentration in the cell, thus reducing its toxicity.</text>
</comment>
<comment type="catalytic activity">
    <reaction evidence="1">
        <text>fluoride(in) = fluoride(out)</text>
        <dbReference type="Rhea" id="RHEA:76159"/>
        <dbReference type="ChEBI" id="CHEBI:17051"/>
    </reaction>
    <physiologicalReaction direction="left-to-right" evidence="1">
        <dbReference type="Rhea" id="RHEA:76160"/>
    </physiologicalReaction>
</comment>
<comment type="activity regulation">
    <text evidence="1">Na(+) is not transported, but it plays an essential structural role and its presence is essential for fluoride channel function.</text>
</comment>
<comment type="subcellular location">
    <subcellularLocation>
        <location evidence="1">Cell inner membrane</location>
        <topology evidence="1">Multi-pass membrane protein</topology>
    </subcellularLocation>
</comment>
<comment type="similarity">
    <text evidence="1">Belongs to the fluoride channel Fluc/FEX (TC 1.A.43) family.</text>
</comment>
<keyword id="KW-0997">Cell inner membrane</keyword>
<keyword id="KW-1003">Cell membrane</keyword>
<keyword id="KW-0407">Ion channel</keyword>
<keyword id="KW-0406">Ion transport</keyword>
<keyword id="KW-0472">Membrane</keyword>
<keyword id="KW-0479">Metal-binding</keyword>
<keyword id="KW-1185">Reference proteome</keyword>
<keyword id="KW-0915">Sodium</keyword>
<keyword id="KW-0812">Transmembrane</keyword>
<keyword id="KW-1133">Transmembrane helix</keyword>
<keyword id="KW-0813">Transport</keyword>
<reference key="1">
    <citation type="journal article" date="2006" name="Proc. Natl. Acad. Sci. U.S.A.">
        <title>The partitioned Rhizobium etli genome: genetic and metabolic redundancy in seven interacting replicons.</title>
        <authorList>
            <person name="Gonzalez V."/>
            <person name="Santamaria R.I."/>
            <person name="Bustos P."/>
            <person name="Hernandez-Gonzalez I."/>
            <person name="Medrano-Soto A."/>
            <person name="Moreno-Hagelsieb G."/>
            <person name="Janga S.C."/>
            <person name="Ramirez M.A."/>
            <person name="Jimenez-Jacinto V."/>
            <person name="Collado-Vides J."/>
            <person name="Davila G."/>
        </authorList>
    </citation>
    <scope>NUCLEOTIDE SEQUENCE [LARGE SCALE GENOMIC DNA]</scope>
    <source>
        <strain>ATCC 51251 / DSM 11541 / JCM 21823 / NBRC 15573 / CFN 42</strain>
    </source>
</reference>
<name>FLUC_RHIEC</name>
<sequence>MIQALLVAVGGAIGSVLRYFVGQWALRLMGPAFPWGTLAVNVVGCFVIGVFAELVTRKFNASVELRLLLITGFLGGFTTFSAFSLDAISLFERGEAVAGGIYIAASVGLSMAAVFAGLAIMRALV</sequence>
<accession>Q2K819</accession>
<proteinExistence type="inferred from homology"/>
<organism>
    <name type="scientific">Rhizobium etli (strain ATCC 51251 / DSM 11541 / JCM 21823 / NBRC 15573 / CFN 42)</name>
    <dbReference type="NCBI Taxonomy" id="347834"/>
    <lineage>
        <taxon>Bacteria</taxon>
        <taxon>Pseudomonadati</taxon>
        <taxon>Pseudomonadota</taxon>
        <taxon>Alphaproteobacteria</taxon>
        <taxon>Hyphomicrobiales</taxon>
        <taxon>Rhizobiaceae</taxon>
        <taxon>Rhizobium/Agrobacterium group</taxon>
        <taxon>Rhizobium</taxon>
    </lineage>
</organism>
<feature type="chain" id="PRO_0000252922" description="Fluoride-specific ion channel FluC">
    <location>
        <begin position="1"/>
        <end position="125"/>
    </location>
</feature>
<feature type="transmembrane region" description="Helical" evidence="1">
    <location>
        <begin position="1"/>
        <end position="21"/>
    </location>
</feature>
<feature type="transmembrane region" description="Helical" evidence="1">
    <location>
        <begin position="32"/>
        <end position="52"/>
    </location>
</feature>
<feature type="transmembrane region" description="Helical" evidence="1">
    <location>
        <begin position="68"/>
        <end position="88"/>
    </location>
</feature>
<feature type="transmembrane region" description="Helical" evidence="1">
    <location>
        <begin position="101"/>
        <end position="121"/>
    </location>
</feature>
<feature type="binding site" evidence="1">
    <location>
        <position position="75"/>
    </location>
    <ligand>
        <name>Na(+)</name>
        <dbReference type="ChEBI" id="CHEBI:29101"/>
        <note>structural</note>
    </ligand>
</feature>
<feature type="binding site" evidence="1">
    <location>
        <position position="78"/>
    </location>
    <ligand>
        <name>Na(+)</name>
        <dbReference type="ChEBI" id="CHEBI:29101"/>
        <note>structural</note>
    </ligand>
</feature>
<protein>
    <recommendedName>
        <fullName evidence="1">Fluoride-specific ion channel FluC</fullName>
    </recommendedName>
</protein>